<accession>P25284</accession>
<accession>Q7RVA6</accession>
<dbReference type="EMBL" id="X56238">
    <property type="protein sequence ID" value="CAA39695.1"/>
    <property type="molecule type" value="Genomic_DNA"/>
</dbReference>
<dbReference type="EMBL" id="CM002242">
    <property type="protein sequence ID" value="EAA30558.3"/>
    <property type="molecule type" value="Genomic_DNA"/>
</dbReference>
<dbReference type="PIR" id="S13025">
    <property type="entry name" value="S13025"/>
</dbReference>
<dbReference type="RefSeq" id="XP_959794.3">
    <property type="nucleotide sequence ID" value="XM_954701.3"/>
</dbReference>
<dbReference type="SMR" id="P25284"/>
<dbReference type="STRING" id="367110.P25284"/>
<dbReference type="TCDB" id="3.D.1.6.2">
    <property type="family name" value="the h+ or na+-translocating nadh dehydrogenase (ndh) family"/>
</dbReference>
<dbReference type="PaxDb" id="5141-EFNCRP00000003236"/>
<dbReference type="EnsemblFungi" id="EAA30558">
    <property type="protein sequence ID" value="EAA30558"/>
    <property type="gene ID" value="NCU02373"/>
</dbReference>
<dbReference type="GeneID" id="3875948"/>
<dbReference type="KEGG" id="ncr:NCU02373"/>
<dbReference type="VEuPathDB" id="FungiDB:NCU02373"/>
<dbReference type="HOGENOM" id="CLU_007383_6_4_1"/>
<dbReference type="InParanoid" id="P25284"/>
<dbReference type="OrthoDB" id="275457at2759"/>
<dbReference type="Proteomes" id="UP000001805">
    <property type="component" value="Chromosome 7, Linkage Group VII"/>
</dbReference>
<dbReference type="GO" id="GO:0005759">
    <property type="term" value="C:mitochondrial matrix"/>
    <property type="evidence" value="ECO:0007669"/>
    <property type="project" value="UniProtKB-SubCell"/>
</dbReference>
<dbReference type="GO" id="GO:0005739">
    <property type="term" value="C:mitochondrion"/>
    <property type="evidence" value="ECO:0000318"/>
    <property type="project" value="GO_Central"/>
</dbReference>
<dbReference type="GO" id="GO:0044877">
    <property type="term" value="F:protein-containing complex binding"/>
    <property type="evidence" value="ECO:0000318"/>
    <property type="project" value="GO_Central"/>
</dbReference>
<dbReference type="GO" id="GO:0006744">
    <property type="term" value="P:ubiquinone biosynthetic process"/>
    <property type="evidence" value="ECO:0000318"/>
    <property type="project" value="GO_Central"/>
</dbReference>
<dbReference type="CDD" id="cd05271">
    <property type="entry name" value="NDUFA9_like_SDR_a"/>
    <property type="match status" value="1"/>
</dbReference>
<dbReference type="FunFam" id="3.40.50.720:FF:000358">
    <property type="entry name" value="NADH-ubiquinone oxidoreductase 39 kDa subunit"/>
    <property type="match status" value="1"/>
</dbReference>
<dbReference type="Gene3D" id="3.40.50.720">
    <property type="entry name" value="NAD(P)-binding Rossmann-like Domain"/>
    <property type="match status" value="1"/>
</dbReference>
<dbReference type="InterPro" id="IPR051207">
    <property type="entry name" value="ComplexI_NDUFA9_subunit"/>
</dbReference>
<dbReference type="InterPro" id="IPR036291">
    <property type="entry name" value="NAD(P)-bd_dom_sf"/>
</dbReference>
<dbReference type="InterPro" id="IPR008030">
    <property type="entry name" value="NmrA-like"/>
</dbReference>
<dbReference type="PANTHER" id="PTHR12126:SF11">
    <property type="entry name" value="NADH DEHYDROGENASE [UBIQUINONE] 1 ALPHA SUBCOMPLEX SUBUNIT 9, MITOCHONDRIAL"/>
    <property type="match status" value="1"/>
</dbReference>
<dbReference type="PANTHER" id="PTHR12126">
    <property type="entry name" value="NADH-UBIQUINONE OXIDOREDUCTASE 39 KDA SUBUNIT-RELATED"/>
    <property type="match status" value="1"/>
</dbReference>
<dbReference type="Pfam" id="PF05368">
    <property type="entry name" value="NmrA"/>
    <property type="match status" value="1"/>
</dbReference>
<dbReference type="SUPFAM" id="SSF51735">
    <property type="entry name" value="NAD(P)-binding Rossmann-fold domains"/>
    <property type="match status" value="1"/>
</dbReference>
<feature type="transit peptide" description="Mitochondrion" evidence="1">
    <location>
        <begin position="1"/>
        <end position="26"/>
    </location>
</feature>
<feature type="chain" id="PRO_0000019994" description="NADH-ubiquinone oxidoreductase 40 kDa subunit, mitochondrial">
    <location>
        <begin position="27"/>
        <end position="375"/>
    </location>
</feature>
<feature type="sequence conflict" description="In Ref. 1; CAA39695." evidence="2" ref="1">
    <original>S</original>
    <variation>R</variation>
    <location>
        <position position="10"/>
    </location>
</feature>
<feature type="sequence conflict" description="In Ref. 1; CAA39695." evidence="2" ref="1">
    <original>A</original>
    <variation>R</variation>
    <location>
        <position position="152"/>
    </location>
</feature>
<sequence>MAPLTAAMRSTPRIIVSNAFGFQRRAISDVTITRTGKPIIRNQGGRSSLGGHTATVFGATGQLGRYIVNRLARQGCTVVIPFRDEYNKRHLKVTGDLGKVVMIEFDLRNTQSIEESVRHSDVVYNLIGRDYPTKNFSFEDVHIEGAERIAEAVAKYDVDRFIHVSSYNADPNSECEFFATKARGEQVVRSIFPETTIVRPAPMFGFEDRLLHKLASVKNILTSNGMQEKYNPVHVIDVGQALEQMLWDDNTASETFELYGPKTYTTAEISEMVDREIYKRRRHVNVPKKILKPIAGVLNKALWWPIMSADEIEREFHDQVIDPEAKTFKDLGIEPADIANFTYHYLQSYRSNAYYDLPPATEKERREDREYIHML</sequence>
<name>NDUA9_NEUCR</name>
<gene>
    <name type="primary">nuo40</name>
    <name type="ORF">NCU02373</name>
</gene>
<reference key="1">
    <citation type="journal article" date="1991" name="FEBS Lett.">
        <title>Relationship between a subunit of NADH dehydrogenase (complex I) and a protein family including subunits of cytochrome reductase and processing protease of mitochondria.</title>
        <authorList>
            <person name="Roehlen D.-A."/>
            <person name="Hoffmann J."/>
            <person name="van der Pas J.C."/>
            <person name="Nehls U."/>
            <person name="Preis D."/>
            <person name="Sackmann U."/>
            <person name="Weiss H."/>
        </authorList>
    </citation>
    <scope>NUCLEOTIDE SEQUENCE [GENOMIC DNA]</scope>
    <scope>PROTEIN SEQUENCE OF 27-45</scope>
    <source>
        <strain>74-ORS-6a / FGSC 4200</strain>
    </source>
</reference>
<reference key="2">
    <citation type="journal article" date="2003" name="Nature">
        <title>The genome sequence of the filamentous fungus Neurospora crassa.</title>
        <authorList>
            <person name="Galagan J.E."/>
            <person name="Calvo S.E."/>
            <person name="Borkovich K.A."/>
            <person name="Selker E.U."/>
            <person name="Read N.D."/>
            <person name="Jaffe D.B."/>
            <person name="FitzHugh W."/>
            <person name="Ma L.-J."/>
            <person name="Smirnov S."/>
            <person name="Purcell S."/>
            <person name="Rehman B."/>
            <person name="Elkins T."/>
            <person name="Engels R."/>
            <person name="Wang S."/>
            <person name="Nielsen C.B."/>
            <person name="Butler J."/>
            <person name="Endrizzi M."/>
            <person name="Qui D."/>
            <person name="Ianakiev P."/>
            <person name="Bell-Pedersen D."/>
            <person name="Nelson M.A."/>
            <person name="Werner-Washburne M."/>
            <person name="Selitrennikoff C.P."/>
            <person name="Kinsey J.A."/>
            <person name="Braun E.L."/>
            <person name="Zelter A."/>
            <person name="Schulte U."/>
            <person name="Kothe G.O."/>
            <person name="Jedd G."/>
            <person name="Mewes H.-W."/>
            <person name="Staben C."/>
            <person name="Marcotte E."/>
            <person name="Greenberg D."/>
            <person name="Roy A."/>
            <person name="Foley K."/>
            <person name="Naylor J."/>
            <person name="Stange-Thomann N."/>
            <person name="Barrett R."/>
            <person name="Gnerre S."/>
            <person name="Kamal M."/>
            <person name="Kamvysselis M."/>
            <person name="Mauceli E.W."/>
            <person name="Bielke C."/>
            <person name="Rudd S."/>
            <person name="Frishman D."/>
            <person name="Krystofova S."/>
            <person name="Rasmussen C."/>
            <person name="Metzenberg R.L."/>
            <person name="Perkins D.D."/>
            <person name="Kroken S."/>
            <person name="Cogoni C."/>
            <person name="Macino G."/>
            <person name="Catcheside D.E.A."/>
            <person name="Li W."/>
            <person name="Pratt R.J."/>
            <person name="Osmani S.A."/>
            <person name="DeSouza C.P.C."/>
            <person name="Glass N.L."/>
            <person name="Orbach M.J."/>
            <person name="Berglund J.A."/>
            <person name="Voelker R."/>
            <person name="Yarden O."/>
            <person name="Plamann M."/>
            <person name="Seiler S."/>
            <person name="Dunlap J.C."/>
            <person name="Radford A."/>
            <person name="Aramayo R."/>
            <person name="Natvig D.O."/>
            <person name="Alex L.A."/>
            <person name="Mannhaupt G."/>
            <person name="Ebbole D.J."/>
            <person name="Freitag M."/>
            <person name="Paulsen I."/>
            <person name="Sachs M.S."/>
            <person name="Lander E.S."/>
            <person name="Nusbaum C."/>
            <person name="Birren B.W."/>
        </authorList>
    </citation>
    <scope>NUCLEOTIDE SEQUENCE [LARGE SCALE GENOMIC DNA]</scope>
    <source>
        <strain>ATCC 24698 / 74-OR23-1A / CBS 708.71 / DSM 1257 / FGSC 987</strain>
    </source>
</reference>
<protein>
    <recommendedName>
        <fullName>NADH-ubiquinone oxidoreductase 40 kDa subunit, mitochondrial</fullName>
    </recommendedName>
    <alternativeName>
        <fullName>Complex I-40kD</fullName>
        <shortName>CI-40kD</shortName>
    </alternativeName>
</protein>
<proteinExistence type="evidence at protein level"/>
<comment type="function">
    <text>Accessory subunit of the mitochondrial membrane respiratory chain NADH dehydrogenase (Complex I), that is believed not to be involved in catalysis. Complex I functions in the transfer of electrons from NADH to the respiratory chain. The immediate electron acceptor for the enzyme is believed to be ubiquinone.</text>
</comment>
<comment type="cofactor">
    <cofactor>
        <name>FAD</name>
        <dbReference type="ChEBI" id="CHEBI:57692"/>
    </cofactor>
    <text>Binds 1 FAD per subunit.</text>
</comment>
<comment type="subunit">
    <text>Complex I is composed of about 40 different subunits.</text>
</comment>
<comment type="subcellular location">
    <subcellularLocation>
        <location>Mitochondrion matrix</location>
    </subcellularLocation>
</comment>
<comment type="similarity">
    <text evidence="2">Belongs to the complex I NDUFA9 subunit family.</text>
</comment>
<organism>
    <name type="scientific">Neurospora crassa (strain ATCC 24698 / 74-OR23-1A / CBS 708.71 / DSM 1257 / FGSC 987)</name>
    <dbReference type="NCBI Taxonomy" id="367110"/>
    <lineage>
        <taxon>Eukaryota</taxon>
        <taxon>Fungi</taxon>
        <taxon>Dikarya</taxon>
        <taxon>Ascomycota</taxon>
        <taxon>Pezizomycotina</taxon>
        <taxon>Sordariomycetes</taxon>
        <taxon>Sordariomycetidae</taxon>
        <taxon>Sordariales</taxon>
        <taxon>Sordariaceae</taxon>
        <taxon>Neurospora</taxon>
    </lineage>
</organism>
<keyword id="KW-0903">Direct protein sequencing</keyword>
<keyword id="KW-0249">Electron transport</keyword>
<keyword id="KW-0274">FAD</keyword>
<keyword id="KW-0285">Flavoprotein</keyword>
<keyword id="KW-0496">Mitochondrion</keyword>
<keyword id="KW-1185">Reference proteome</keyword>
<keyword id="KW-0679">Respiratory chain</keyword>
<keyword id="KW-0809">Transit peptide</keyword>
<keyword id="KW-0813">Transport</keyword>
<evidence type="ECO:0000269" key="1">
    <source>
    </source>
</evidence>
<evidence type="ECO:0000305" key="2"/>